<organism>
    <name type="scientific">Escherichia coli O81 (strain ED1a)</name>
    <dbReference type="NCBI Taxonomy" id="585397"/>
    <lineage>
        <taxon>Bacteria</taxon>
        <taxon>Pseudomonadati</taxon>
        <taxon>Pseudomonadota</taxon>
        <taxon>Gammaproteobacteria</taxon>
        <taxon>Enterobacterales</taxon>
        <taxon>Enterobacteriaceae</taxon>
        <taxon>Escherichia</taxon>
    </lineage>
</organism>
<name>TGT_ECO81</name>
<evidence type="ECO:0000255" key="1">
    <source>
        <dbReference type="HAMAP-Rule" id="MF_00168"/>
    </source>
</evidence>
<accession>B7MPG7</accession>
<proteinExistence type="inferred from homology"/>
<protein>
    <recommendedName>
        <fullName evidence="1">Queuine tRNA-ribosyltransferase</fullName>
        <ecNumber evidence="1">2.4.2.29</ecNumber>
    </recommendedName>
    <alternativeName>
        <fullName evidence="1">Guanine insertion enzyme</fullName>
    </alternativeName>
    <alternativeName>
        <fullName evidence="1">tRNA-guanine transglycosylase</fullName>
    </alternativeName>
</protein>
<comment type="function">
    <text evidence="1">Catalyzes the base-exchange of a guanine (G) residue with the queuine precursor 7-aminomethyl-7-deazaguanine (PreQ1) at position 34 (anticodon wobble position) in tRNAs with GU(N) anticodons (tRNA-Asp, -Asn, -His and -Tyr). Catalysis occurs through a double-displacement mechanism. The nucleophile active site attacks the C1' of nucleotide 34 to detach the guanine base from the RNA, forming a covalent enzyme-RNA intermediate. The proton acceptor active site deprotonates the incoming PreQ1, allowing a nucleophilic attack on the C1' of the ribose to form the product. After dissociation, two additional enzymatic reactions on the tRNA convert PreQ1 to queuine (Q), resulting in the hypermodified nucleoside queuosine (7-(((4,5-cis-dihydroxy-2-cyclopenten-1-yl)amino)methyl)-7-deazaguanosine).</text>
</comment>
<comment type="catalytic activity">
    <reaction evidence="1">
        <text>7-aminomethyl-7-carbaguanine + guanosine(34) in tRNA = 7-aminomethyl-7-carbaguanosine(34) in tRNA + guanine</text>
        <dbReference type="Rhea" id="RHEA:24104"/>
        <dbReference type="Rhea" id="RHEA-COMP:10341"/>
        <dbReference type="Rhea" id="RHEA-COMP:10342"/>
        <dbReference type="ChEBI" id="CHEBI:16235"/>
        <dbReference type="ChEBI" id="CHEBI:58703"/>
        <dbReference type="ChEBI" id="CHEBI:74269"/>
        <dbReference type="ChEBI" id="CHEBI:82833"/>
        <dbReference type="EC" id="2.4.2.29"/>
    </reaction>
</comment>
<comment type="cofactor">
    <cofactor evidence="1">
        <name>Zn(2+)</name>
        <dbReference type="ChEBI" id="CHEBI:29105"/>
    </cofactor>
    <text evidence="1">Binds 1 zinc ion per subunit.</text>
</comment>
<comment type="pathway">
    <text evidence="1">tRNA modification; tRNA-queuosine biosynthesis.</text>
</comment>
<comment type="subunit">
    <text evidence="1">Homodimer. Within each dimer, one monomer is responsible for RNA recognition and catalysis, while the other monomer binds to the replacement base PreQ1.</text>
</comment>
<comment type="similarity">
    <text evidence="1">Belongs to the queuine tRNA-ribosyltransferase family.</text>
</comment>
<keyword id="KW-0328">Glycosyltransferase</keyword>
<keyword id="KW-0479">Metal-binding</keyword>
<keyword id="KW-0671">Queuosine biosynthesis</keyword>
<keyword id="KW-0808">Transferase</keyword>
<keyword id="KW-0819">tRNA processing</keyword>
<keyword id="KW-0862">Zinc</keyword>
<gene>
    <name evidence="1" type="primary">tgt</name>
    <name type="ordered locus">ECED1_0429</name>
</gene>
<feature type="chain" id="PRO_1000198007" description="Queuine tRNA-ribosyltransferase">
    <location>
        <begin position="1"/>
        <end position="375"/>
    </location>
</feature>
<feature type="region of interest" description="RNA binding" evidence="1">
    <location>
        <begin position="245"/>
        <end position="251"/>
    </location>
</feature>
<feature type="region of interest" description="RNA binding; important for wobble base 34 recognition" evidence="1">
    <location>
        <begin position="269"/>
        <end position="273"/>
    </location>
</feature>
<feature type="active site" description="Proton acceptor" evidence="1">
    <location>
        <position position="89"/>
    </location>
</feature>
<feature type="active site" description="Nucleophile" evidence="1">
    <location>
        <position position="264"/>
    </location>
</feature>
<feature type="binding site" evidence="1">
    <location>
        <begin position="89"/>
        <end position="93"/>
    </location>
    <ligand>
        <name>substrate</name>
    </ligand>
</feature>
<feature type="binding site" evidence="1">
    <location>
        <position position="143"/>
    </location>
    <ligand>
        <name>substrate</name>
    </ligand>
</feature>
<feature type="binding site" evidence="1">
    <location>
        <position position="187"/>
    </location>
    <ligand>
        <name>substrate</name>
    </ligand>
</feature>
<feature type="binding site" evidence="1">
    <location>
        <position position="214"/>
    </location>
    <ligand>
        <name>substrate</name>
    </ligand>
</feature>
<feature type="binding site" evidence="1">
    <location>
        <position position="302"/>
    </location>
    <ligand>
        <name>Zn(2+)</name>
        <dbReference type="ChEBI" id="CHEBI:29105"/>
    </ligand>
</feature>
<feature type="binding site" evidence="1">
    <location>
        <position position="304"/>
    </location>
    <ligand>
        <name>Zn(2+)</name>
        <dbReference type="ChEBI" id="CHEBI:29105"/>
    </ligand>
</feature>
<feature type="binding site" evidence="1">
    <location>
        <position position="307"/>
    </location>
    <ligand>
        <name>Zn(2+)</name>
        <dbReference type="ChEBI" id="CHEBI:29105"/>
    </ligand>
</feature>
<feature type="binding site" evidence="1">
    <location>
        <position position="333"/>
    </location>
    <ligand>
        <name>Zn(2+)</name>
        <dbReference type="ChEBI" id="CHEBI:29105"/>
    </ligand>
</feature>
<reference key="1">
    <citation type="journal article" date="2009" name="PLoS Genet.">
        <title>Organised genome dynamics in the Escherichia coli species results in highly diverse adaptive paths.</title>
        <authorList>
            <person name="Touchon M."/>
            <person name="Hoede C."/>
            <person name="Tenaillon O."/>
            <person name="Barbe V."/>
            <person name="Baeriswyl S."/>
            <person name="Bidet P."/>
            <person name="Bingen E."/>
            <person name="Bonacorsi S."/>
            <person name="Bouchier C."/>
            <person name="Bouvet O."/>
            <person name="Calteau A."/>
            <person name="Chiapello H."/>
            <person name="Clermont O."/>
            <person name="Cruveiller S."/>
            <person name="Danchin A."/>
            <person name="Diard M."/>
            <person name="Dossat C."/>
            <person name="Karoui M.E."/>
            <person name="Frapy E."/>
            <person name="Garry L."/>
            <person name="Ghigo J.M."/>
            <person name="Gilles A.M."/>
            <person name="Johnson J."/>
            <person name="Le Bouguenec C."/>
            <person name="Lescat M."/>
            <person name="Mangenot S."/>
            <person name="Martinez-Jehanne V."/>
            <person name="Matic I."/>
            <person name="Nassif X."/>
            <person name="Oztas S."/>
            <person name="Petit M.A."/>
            <person name="Pichon C."/>
            <person name="Rouy Z."/>
            <person name="Ruf C.S."/>
            <person name="Schneider D."/>
            <person name="Tourret J."/>
            <person name="Vacherie B."/>
            <person name="Vallenet D."/>
            <person name="Medigue C."/>
            <person name="Rocha E.P.C."/>
            <person name="Denamur E."/>
        </authorList>
    </citation>
    <scope>NUCLEOTIDE SEQUENCE [LARGE SCALE GENOMIC DNA]</scope>
    <source>
        <strain>ED1a</strain>
    </source>
</reference>
<dbReference type="EC" id="2.4.2.29" evidence="1"/>
<dbReference type="EMBL" id="CU928162">
    <property type="protein sequence ID" value="CAR06639.1"/>
    <property type="molecule type" value="Genomic_DNA"/>
</dbReference>
<dbReference type="RefSeq" id="WP_000667319.1">
    <property type="nucleotide sequence ID" value="NC_011745.1"/>
</dbReference>
<dbReference type="SMR" id="B7MPG7"/>
<dbReference type="GeneID" id="93777054"/>
<dbReference type="KEGG" id="ecq:ECED1_0429"/>
<dbReference type="HOGENOM" id="CLU_022060_0_1_6"/>
<dbReference type="UniPathway" id="UPA00392"/>
<dbReference type="Proteomes" id="UP000000748">
    <property type="component" value="Chromosome"/>
</dbReference>
<dbReference type="GO" id="GO:0005829">
    <property type="term" value="C:cytosol"/>
    <property type="evidence" value="ECO:0007669"/>
    <property type="project" value="TreeGrafter"/>
</dbReference>
<dbReference type="GO" id="GO:0046872">
    <property type="term" value="F:metal ion binding"/>
    <property type="evidence" value="ECO:0007669"/>
    <property type="project" value="UniProtKB-KW"/>
</dbReference>
<dbReference type="GO" id="GO:0008479">
    <property type="term" value="F:tRNA-guanosine(34) queuine transglycosylase activity"/>
    <property type="evidence" value="ECO:0007669"/>
    <property type="project" value="UniProtKB-UniRule"/>
</dbReference>
<dbReference type="GO" id="GO:0008616">
    <property type="term" value="P:queuosine biosynthetic process"/>
    <property type="evidence" value="ECO:0007669"/>
    <property type="project" value="UniProtKB-UniRule"/>
</dbReference>
<dbReference type="GO" id="GO:0002099">
    <property type="term" value="P:tRNA wobble guanine modification"/>
    <property type="evidence" value="ECO:0007669"/>
    <property type="project" value="TreeGrafter"/>
</dbReference>
<dbReference type="GO" id="GO:0101030">
    <property type="term" value="P:tRNA-guanine transglycosylation"/>
    <property type="evidence" value="ECO:0007669"/>
    <property type="project" value="InterPro"/>
</dbReference>
<dbReference type="FunFam" id="3.20.20.105:FF:000001">
    <property type="entry name" value="Queuine tRNA-ribosyltransferase"/>
    <property type="match status" value="1"/>
</dbReference>
<dbReference type="Gene3D" id="3.20.20.105">
    <property type="entry name" value="Queuine tRNA-ribosyltransferase-like"/>
    <property type="match status" value="1"/>
</dbReference>
<dbReference type="HAMAP" id="MF_00168">
    <property type="entry name" value="Q_tRNA_Tgt"/>
    <property type="match status" value="1"/>
</dbReference>
<dbReference type="InterPro" id="IPR050076">
    <property type="entry name" value="ArchSynthase1/Queuine_TRR"/>
</dbReference>
<dbReference type="InterPro" id="IPR004803">
    <property type="entry name" value="TGT"/>
</dbReference>
<dbReference type="InterPro" id="IPR036511">
    <property type="entry name" value="TGT-like_sf"/>
</dbReference>
<dbReference type="InterPro" id="IPR002616">
    <property type="entry name" value="tRNA_ribo_trans-like"/>
</dbReference>
<dbReference type="NCBIfam" id="TIGR00430">
    <property type="entry name" value="Q_tRNA_tgt"/>
    <property type="match status" value="1"/>
</dbReference>
<dbReference type="NCBIfam" id="TIGR00449">
    <property type="entry name" value="tgt_general"/>
    <property type="match status" value="1"/>
</dbReference>
<dbReference type="PANTHER" id="PTHR46499">
    <property type="entry name" value="QUEUINE TRNA-RIBOSYLTRANSFERASE"/>
    <property type="match status" value="1"/>
</dbReference>
<dbReference type="PANTHER" id="PTHR46499:SF1">
    <property type="entry name" value="QUEUINE TRNA-RIBOSYLTRANSFERASE"/>
    <property type="match status" value="1"/>
</dbReference>
<dbReference type="Pfam" id="PF01702">
    <property type="entry name" value="TGT"/>
    <property type="match status" value="1"/>
</dbReference>
<dbReference type="SUPFAM" id="SSF51713">
    <property type="entry name" value="tRNA-guanine transglycosylase"/>
    <property type="match status" value="1"/>
</dbReference>
<sequence length="375" mass="42594">MKFELDTTDGRARRGRLVFDRGVVETPCFMPVGTYGTVKGMTPEEVEATGAQIILGNTFHLWLRPGQEIMKLHGDLHDFMQWKGPILTDSGGFQVFSLGDIRKITEQGVHFRNPINGDPIFLDPEKSMEIQYDLGSDIVMIFDECTPYPADWDYAKRSMEMSLRWAKRSRERFDSLGNKNALFGIIQGSVYEDLRDISVKGLVDIGFDGYAVGGLAVGEPKADMHRILEHVCPQIPADKPRYLMGVGKPEDLVEGVRRGIDMFDCVMPTRNARNGHLFVTDGVVKIRNAKYKSDTGPLDPECDCYTCRNYSRAYLHHLDRCNEILGARLNTIHNLRYYQRLMAGLRKAIEEGKLESFVTDFYQRQGREVPPLNVD</sequence>